<reference key="1">
    <citation type="journal article" date="2000" name="DNA Res.">
        <title>Complete genome structure of the nitrogen-fixing symbiotic bacterium Mesorhizobium loti.</title>
        <authorList>
            <person name="Kaneko T."/>
            <person name="Nakamura Y."/>
            <person name="Sato S."/>
            <person name="Asamizu E."/>
            <person name="Kato T."/>
            <person name="Sasamoto S."/>
            <person name="Watanabe A."/>
            <person name="Idesawa K."/>
            <person name="Ishikawa A."/>
            <person name="Kawashima K."/>
            <person name="Kimura T."/>
            <person name="Kishida Y."/>
            <person name="Kiyokawa C."/>
            <person name="Kohara M."/>
            <person name="Matsumoto M."/>
            <person name="Matsuno A."/>
            <person name="Mochizuki Y."/>
            <person name="Nakayama S."/>
            <person name="Nakazaki N."/>
            <person name="Shimpo S."/>
            <person name="Sugimoto M."/>
            <person name="Takeuchi C."/>
            <person name="Yamada M."/>
            <person name="Tabata S."/>
        </authorList>
    </citation>
    <scope>NUCLEOTIDE SEQUENCE [LARGE SCALE GENOMIC DNA]</scope>
    <source>
        <strain>LMG 29417 / CECT 9101 / MAFF 303099</strain>
    </source>
</reference>
<evidence type="ECO:0000255" key="1">
    <source>
        <dbReference type="HAMAP-Rule" id="MF_00685"/>
    </source>
</evidence>
<organism>
    <name type="scientific">Mesorhizobium japonicum (strain LMG 29417 / CECT 9101 / MAFF 303099)</name>
    <name type="common">Mesorhizobium loti (strain MAFF 303099)</name>
    <dbReference type="NCBI Taxonomy" id="266835"/>
    <lineage>
        <taxon>Bacteria</taxon>
        <taxon>Pseudomonadati</taxon>
        <taxon>Pseudomonadota</taxon>
        <taxon>Alphaproteobacteria</taxon>
        <taxon>Hyphomicrobiales</taxon>
        <taxon>Phyllobacteriaceae</taxon>
        <taxon>Mesorhizobium</taxon>
    </lineage>
</organism>
<comment type="function">
    <text evidence="1">Catalyzes the formation of the alpha-1,6-glucosidic linkages in glycogen by scission of a 1,4-alpha-linked oligosaccharide from growing alpha-1,4-glucan chains and the subsequent attachment of the oligosaccharide to the alpha-1,6 position.</text>
</comment>
<comment type="catalytic activity">
    <reaction evidence="1">
        <text>Transfers a segment of a (1-&gt;4)-alpha-D-glucan chain to a primary hydroxy group in a similar glucan chain.</text>
        <dbReference type="EC" id="2.4.1.18"/>
    </reaction>
</comment>
<comment type="pathway">
    <text evidence="1">Glycan biosynthesis; glycogen biosynthesis.</text>
</comment>
<comment type="subunit">
    <text evidence="1">Monomer.</text>
</comment>
<comment type="similarity">
    <text evidence="1">Belongs to the glycosyl hydrolase 13 family. GlgB subfamily.</text>
</comment>
<proteinExistence type="inferred from homology"/>
<gene>
    <name evidence="1" type="primary">glgB</name>
    <name type="ordered locus">mlr7587</name>
</gene>
<protein>
    <recommendedName>
        <fullName evidence="1">1,4-alpha-glucan branching enzyme GlgB</fullName>
        <ecNumber evidence="1">2.4.1.18</ecNumber>
    </recommendedName>
    <alternativeName>
        <fullName evidence="1">1,4-alpha-D-glucan:1,4-alpha-D-glucan 6-glucosyl-transferase</fullName>
    </alternativeName>
    <alternativeName>
        <fullName evidence="1">Alpha-(1-&gt;4)-glucan branching enzyme</fullName>
    </alternativeName>
    <alternativeName>
        <fullName evidence="1">Glycogen branching enzyme</fullName>
        <shortName evidence="1">BE</shortName>
    </alternativeName>
</protein>
<feature type="chain" id="PRO_0000188734" description="1,4-alpha-glucan branching enzyme GlgB">
    <location>
        <begin position="1"/>
        <end position="737"/>
    </location>
</feature>
<feature type="active site" description="Nucleophile" evidence="1">
    <location>
        <position position="419"/>
    </location>
</feature>
<feature type="active site" description="Proton donor" evidence="1">
    <location>
        <position position="472"/>
    </location>
</feature>
<accession>Q985P4</accession>
<name>GLGB_RHILO</name>
<keyword id="KW-0119">Carbohydrate metabolism</keyword>
<keyword id="KW-0320">Glycogen biosynthesis</keyword>
<keyword id="KW-0321">Glycogen metabolism</keyword>
<keyword id="KW-0328">Glycosyltransferase</keyword>
<keyword id="KW-0808">Transferase</keyword>
<sequence>MRKPRVTAATSGPDGLAPASDVAAIVAGTHGDPFAVLGVHEVGKGLFARCFVPHAETVTAYTLTGIEAGALSRRDDAGFFEGKLSIKKRQPLRYHAHNAGGDWWLTDPYSFGPVLGPMDDYYIAEGSHLRLFDKLGAHVIEHEGATGVHFAVWAPNAKRVSVVGDFNDWDGRRHTMRDRRDTGIWEVFIPDIGAGRPYKYEIIGPDGVRLPLKADPFAFKSELRPATASVVAVPPAHDWGDEAHRNYWRNADPRREAVSIYEVHAGSWQLHDDGTFLSWDELADRLIPYVVETGFTHIEFMPISEHPYDPSWGYQTTGLYAPSARFGDPDGFARFVDGAHRAGVGVILDWVPAHFPVDAHGLAHFDGTALYEHADPRKGFHPDWNTAIYNFGRREVVSFLVNNALFWAEKYHVDGLRVDAVASMLYLDYSRKAGEWIPNEKGGRENLEAVSFLQKMNKEVYGHHPGVMTIAEESTSWPKVSAPVHEGGLGFGFKWNMGFMHDTLEYFSKEPIFRKHHHNDLTFGLTYAFSENFVLPLSHDEVVHGKGTLLSKMAGDDWQKFATLRAYYGFMWGYPGKKLLFMGQEFAQRREWSEARALDWNLLDFRPHRGVWQTVRDLNYLYRSRPALHGRDCEPEGFSWLIVDDSQNSVFAWVRNAPGGSPVAVISNFTPVPRDNYRVPLPKAGKWREIINTDASEYGGSGMGNGGMVEARAEGKNISATMLLPPLSTIMLELVAD</sequence>
<dbReference type="EC" id="2.4.1.18" evidence="1"/>
<dbReference type="EMBL" id="BA000012">
    <property type="protein sequence ID" value="BAB54018.1"/>
    <property type="molecule type" value="Genomic_DNA"/>
</dbReference>
<dbReference type="RefSeq" id="WP_010914966.1">
    <property type="nucleotide sequence ID" value="NC_002678.2"/>
</dbReference>
<dbReference type="SMR" id="Q985P4"/>
<dbReference type="CAZy" id="CBM48">
    <property type="family name" value="Carbohydrate-Binding Module Family 48"/>
</dbReference>
<dbReference type="CAZy" id="GH13">
    <property type="family name" value="Glycoside Hydrolase Family 13"/>
</dbReference>
<dbReference type="KEGG" id="mlo:mlr7587"/>
<dbReference type="PATRIC" id="fig|266835.9.peg.6068"/>
<dbReference type="eggNOG" id="COG0296">
    <property type="taxonomic scope" value="Bacteria"/>
</dbReference>
<dbReference type="HOGENOM" id="CLU_004245_3_2_5"/>
<dbReference type="UniPathway" id="UPA00164"/>
<dbReference type="Proteomes" id="UP000000552">
    <property type="component" value="Chromosome"/>
</dbReference>
<dbReference type="GO" id="GO:0005829">
    <property type="term" value="C:cytosol"/>
    <property type="evidence" value="ECO:0007669"/>
    <property type="project" value="TreeGrafter"/>
</dbReference>
<dbReference type="GO" id="GO:0003844">
    <property type="term" value="F:1,4-alpha-glucan branching enzyme activity"/>
    <property type="evidence" value="ECO:0007669"/>
    <property type="project" value="UniProtKB-UniRule"/>
</dbReference>
<dbReference type="GO" id="GO:0043169">
    <property type="term" value="F:cation binding"/>
    <property type="evidence" value="ECO:0007669"/>
    <property type="project" value="InterPro"/>
</dbReference>
<dbReference type="GO" id="GO:0004553">
    <property type="term" value="F:hydrolase activity, hydrolyzing O-glycosyl compounds"/>
    <property type="evidence" value="ECO:0007669"/>
    <property type="project" value="InterPro"/>
</dbReference>
<dbReference type="GO" id="GO:0005978">
    <property type="term" value="P:glycogen biosynthetic process"/>
    <property type="evidence" value="ECO:0007669"/>
    <property type="project" value="UniProtKB-UniRule"/>
</dbReference>
<dbReference type="CDD" id="cd11322">
    <property type="entry name" value="AmyAc_Glg_BE"/>
    <property type="match status" value="1"/>
</dbReference>
<dbReference type="CDD" id="cd02855">
    <property type="entry name" value="E_set_GBE_prok_N"/>
    <property type="match status" value="1"/>
</dbReference>
<dbReference type="FunFam" id="2.60.40.10:FF:000169">
    <property type="entry name" value="1,4-alpha-glucan branching enzyme GlgB"/>
    <property type="match status" value="1"/>
</dbReference>
<dbReference type="FunFam" id="2.60.40.1180:FF:000002">
    <property type="entry name" value="1,4-alpha-glucan branching enzyme GlgB"/>
    <property type="match status" value="1"/>
</dbReference>
<dbReference type="FunFam" id="3.20.20.80:FF:000003">
    <property type="entry name" value="1,4-alpha-glucan branching enzyme GlgB"/>
    <property type="match status" value="1"/>
</dbReference>
<dbReference type="Gene3D" id="3.20.20.80">
    <property type="entry name" value="Glycosidases"/>
    <property type="match status" value="1"/>
</dbReference>
<dbReference type="Gene3D" id="2.60.40.1180">
    <property type="entry name" value="Golgi alpha-mannosidase II"/>
    <property type="match status" value="1"/>
</dbReference>
<dbReference type="Gene3D" id="2.60.40.10">
    <property type="entry name" value="Immunoglobulins"/>
    <property type="match status" value="2"/>
</dbReference>
<dbReference type="HAMAP" id="MF_00685">
    <property type="entry name" value="GlgB"/>
    <property type="match status" value="1"/>
</dbReference>
<dbReference type="InterPro" id="IPR006048">
    <property type="entry name" value="A-amylase/branching_C"/>
</dbReference>
<dbReference type="InterPro" id="IPR037439">
    <property type="entry name" value="Branching_enzy"/>
</dbReference>
<dbReference type="InterPro" id="IPR006407">
    <property type="entry name" value="GlgB"/>
</dbReference>
<dbReference type="InterPro" id="IPR054169">
    <property type="entry name" value="GlgB_N"/>
</dbReference>
<dbReference type="InterPro" id="IPR044143">
    <property type="entry name" value="GlgB_N_E_set_prok"/>
</dbReference>
<dbReference type="InterPro" id="IPR006047">
    <property type="entry name" value="Glyco_hydro_13_cat_dom"/>
</dbReference>
<dbReference type="InterPro" id="IPR004193">
    <property type="entry name" value="Glyco_hydro_13_N"/>
</dbReference>
<dbReference type="InterPro" id="IPR013780">
    <property type="entry name" value="Glyco_hydro_b"/>
</dbReference>
<dbReference type="InterPro" id="IPR017853">
    <property type="entry name" value="Glycoside_hydrolase_SF"/>
</dbReference>
<dbReference type="InterPro" id="IPR013783">
    <property type="entry name" value="Ig-like_fold"/>
</dbReference>
<dbReference type="InterPro" id="IPR014756">
    <property type="entry name" value="Ig_E-set"/>
</dbReference>
<dbReference type="NCBIfam" id="TIGR01515">
    <property type="entry name" value="branching_enzym"/>
    <property type="match status" value="1"/>
</dbReference>
<dbReference type="NCBIfam" id="NF003811">
    <property type="entry name" value="PRK05402.1"/>
    <property type="match status" value="1"/>
</dbReference>
<dbReference type="NCBIfam" id="NF008967">
    <property type="entry name" value="PRK12313.1"/>
    <property type="match status" value="1"/>
</dbReference>
<dbReference type="PANTHER" id="PTHR43651">
    <property type="entry name" value="1,4-ALPHA-GLUCAN-BRANCHING ENZYME"/>
    <property type="match status" value="1"/>
</dbReference>
<dbReference type="PANTHER" id="PTHR43651:SF3">
    <property type="entry name" value="1,4-ALPHA-GLUCAN-BRANCHING ENZYME"/>
    <property type="match status" value="1"/>
</dbReference>
<dbReference type="Pfam" id="PF00128">
    <property type="entry name" value="Alpha-amylase"/>
    <property type="match status" value="2"/>
</dbReference>
<dbReference type="Pfam" id="PF02806">
    <property type="entry name" value="Alpha-amylase_C"/>
    <property type="match status" value="1"/>
</dbReference>
<dbReference type="Pfam" id="PF02922">
    <property type="entry name" value="CBM_48"/>
    <property type="match status" value="1"/>
</dbReference>
<dbReference type="Pfam" id="PF22019">
    <property type="entry name" value="GlgB_N"/>
    <property type="match status" value="1"/>
</dbReference>
<dbReference type="PIRSF" id="PIRSF000463">
    <property type="entry name" value="GlgB"/>
    <property type="match status" value="1"/>
</dbReference>
<dbReference type="SMART" id="SM00642">
    <property type="entry name" value="Aamy"/>
    <property type="match status" value="1"/>
</dbReference>
<dbReference type="SUPFAM" id="SSF51445">
    <property type="entry name" value="(Trans)glycosidases"/>
    <property type="match status" value="1"/>
</dbReference>
<dbReference type="SUPFAM" id="SSF81296">
    <property type="entry name" value="E set domains"/>
    <property type="match status" value="1"/>
</dbReference>
<dbReference type="SUPFAM" id="SSF51011">
    <property type="entry name" value="Glycosyl hydrolase domain"/>
    <property type="match status" value="1"/>
</dbReference>